<sequence>SGSKTANIGDGCFGVPIDHIGSTSGMGCGSPRPKPTPGGS</sequence>
<dbReference type="EMBL" id="DQ116729">
    <property type="protein sequence ID" value="AAZ82824.1"/>
    <property type="molecule type" value="mRNA"/>
</dbReference>
<dbReference type="GO" id="GO:0005576">
    <property type="term" value="C:extracellular region"/>
    <property type="evidence" value="ECO:0007669"/>
    <property type="project" value="UniProtKB-SubCell"/>
</dbReference>
<dbReference type="GO" id="GO:0005179">
    <property type="term" value="F:hormone activity"/>
    <property type="evidence" value="ECO:0007669"/>
    <property type="project" value="InterPro"/>
</dbReference>
<dbReference type="GO" id="GO:0090729">
    <property type="term" value="F:toxin activity"/>
    <property type="evidence" value="ECO:0007669"/>
    <property type="project" value="UniProtKB-KW"/>
</dbReference>
<dbReference type="GO" id="GO:0008217">
    <property type="term" value="P:regulation of blood pressure"/>
    <property type="evidence" value="ECO:0007669"/>
    <property type="project" value="UniProtKB-KW"/>
</dbReference>
<dbReference type="GO" id="GO:0042311">
    <property type="term" value="P:vasodilation"/>
    <property type="evidence" value="ECO:0007669"/>
    <property type="project" value="UniProtKB-KW"/>
</dbReference>
<dbReference type="InterPro" id="IPR000663">
    <property type="entry name" value="Natr_peptide"/>
</dbReference>
<dbReference type="InterPro" id="IPR030480">
    <property type="entry name" value="Natr_peptide_CS"/>
</dbReference>
<dbReference type="Pfam" id="PF00212">
    <property type="entry name" value="ANP"/>
    <property type="match status" value="1"/>
</dbReference>
<dbReference type="SMART" id="SM00183">
    <property type="entry name" value="NAT_PEP"/>
    <property type="match status" value="1"/>
</dbReference>
<dbReference type="PROSITE" id="PS00263">
    <property type="entry name" value="NATRIURETIC_PEPTIDE"/>
    <property type="match status" value="1"/>
</dbReference>
<name>VNPA_PSEPO</name>
<proteinExistence type="evidence at transcript level"/>
<organism>
    <name type="scientific">Pseudechis porphyriacus</name>
    <name type="common">Red-bellied black snake</name>
    <dbReference type="NCBI Taxonomy" id="8671"/>
    <lineage>
        <taxon>Eukaryota</taxon>
        <taxon>Metazoa</taxon>
        <taxon>Chordata</taxon>
        <taxon>Craniata</taxon>
        <taxon>Vertebrata</taxon>
        <taxon>Euteleostomi</taxon>
        <taxon>Lepidosauria</taxon>
        <taxon>Squamata</taxon>
        <taxon>Bifurcata</taxon>
        <taxon>Unidentata</taxon>
        <taxon>Episquamata</taxon>
        <taxon>Toxicofera</taxon>
        <taxon>Serpentes</taxon>
        <taxon>Colubroidea</taxon>
        <taxon>Elapidae</taxon>
        <taxon>Hydrophiinae</taxon>
        <taxon>Pseudechis</taxon>
    </lineage>
</organism>
<feature type="propeptide" id="PRO_0000459639" evidence="5">
    <location>
        <begin position="1" status="less than"/>
        <end position="8"/>
    </location>
</feature>
<feature type="peptide" id="PRO_5000140407" description="Natriuretic peptide PpNP-a" evidence="2">
    <location>
        <begin position="9"/>
        <end position="40"/>
    </location>
</feature>
<feature type="region of interest" description="Disordered" evidence="3">
    <location>
        <begin position="1"/>
        <end position="40"/>
    </location>
</feature>
<feature type="disulfide bond" evidence="2">
    <location>
        <begin position="12"/>
        <end position="28"/>
    </location>
</feature>
<feature type="non-terminal residue">
    <location>
        <position position="1"/>
    </location>
</feature>
<comment type="function">
    <text evidence="1 2">Snake venom natriuretic peptide that targets both NPR1 and NPR2 (By similarity). Exhibits hypotensive and vasodepressor activities (By similarity).</text>
</comment>
<comment type="subcellular location">
    <subcellularLocation>
        <location evidence="6">Secreted</location>
    </subcellularLocation>
</comment>
<comment type="tissue specificity">
    <text evidence="6">Expressed by the venom gland.</text>
</comment>
<comment type="similarity">
    <text evidence="5">Belongs to the natriuretic peptide family.</text>
</comment>
<accession>Q3SAF1</accession>
<evidence type="ECO:0000250" key="1">
    <source>
        <dbReference type="UniProtKB" id="C6EVG7"/>
    </source>
</evidence>
<evidence type="ECO:0000250" key="2">
    <source>
        <dbReference type="UniProtKB" id="Q3SAE9"/>
    </source>
</evidence>
<evidence type="ECO:0000256" key="3">
    <source>
        <dbReference type="SAM" id="MobiDB-lite"/>
    </source>
</evidence>
<evidence type="ECO:0000303" key="4">
    <source>
    </source>
</evidence>
<evidence type="ECO:0000305" key="5"/>
<evidence type="ECO:0000305" key="6">
    <source>
    </source>
</evidence>
<keyword id="KW-1015">Disulfide bond</keyword>
<keyword id="KW-0382">Hypotensive agent</keyword>
<keyword id="KW-0964">Secreted</keyword>
<keyword id="KW-0800">Toxin</keyword>
<keyword id="KW-0838">Vasoactive</keyword>
<keyword id="KW-0840">Vasodilator</keyword>
<protein>
    <recommendedName>
        <fullName evidence="4">Natriuretic peptide PpNP-a</fullName>
    </recommendedName>
</protein>
<reference key="1">
    <citation type="journal article" date="2006" name="Biochimie">
        <title>Cloning and characterisation of natriuretic peptides from the venom glands of Australian elapids.</title>
        <authorList>
            <person name="St Pierre L."/>
            <person name="Flight S."/>
            <person name="Masci P.P."/>
            <person name="Hanchard K.J."/>
            <person name="Lewis R.J."/>
            <person name="Alewood P.F."/>
            <person name="de Jersey J."/>
            <person name="Lavin M.F."/>
        </authorList>
    </citation>
    <scope>NUCLEOTIDE SEQUENCE [MRNA]</scope>
    <source>
        <tissue>Venom gland</tissue>
    </source>
</reference>